<comment type="function">
    <text evidence="1">Catalyzes the attachment of tyrosine to tRNA(Tyr) in a two-step reaction: tyrosine is first activated by ATP to form Tyr-AMP and then transferred to the acceptor end of tRNA(Tyr).</text>
</comment>
<comment type="catalytic activity">
    <reaction evidence="1">
        <text>tRNA(Tyr) + L-tyrosine + ATP = L-tyrosyl-tRNA(Tyr) + AMP + diphosphate + H(+)</text>
        <dbReference type="Rhea" id="RHEA:10220"/>
        <dbReference type="Rhea" id="RHEA-COMP:9706"/>
        <dbReference type="Rhea" id="RHEA-COMP:9707"/>
        <dbReference type="ChEBI" id="CHEBI:15378"/>
        <dbReference type="ChEBI" id="CHEBI:30616"/>
        <dbReference type="ChEBI" id="CHEBI:33019"/>
        <dbReference type="ChEBI" id="CHEBI:58315"/>
        <dbReference type="ChEBI" id="CHEBI:78442"/>
        <dbReference type="ChEBI" id="CHEBI:78536"/>
        <dbReference type="ChEBI" id="CHEBI:456215"/>
        <dbReference type="EC" id="6.1.1.1"/>
    </reaction>
</comment>
<comment type="subunit">
    <text evidence="1">Homodimer.</text>
</comment>
<comment type="subcellular location">
    <subcellularLocation>
        <location evidence="1">Cytoplasm</location>
    </subcellularLocation>
</comment>
<comment type="similarity">
    <text evidence="1">Belongs to the class-I aminoacyl-tRNA synthetase family. TyrS type 1 subfamily.</text>
</comment>
<organism>
    <name type="scientific">Ligilactobacillus salivarius (strain UCC118)</name>
    <name type="common">Lactobacillus salivarius</name>
    <dbReference type="NCBI Taxonomy" id="362948"/>
    <lineage>
        <taxon>Bacteria</taxon>
        <taxon>Bacillati</taxon>
        <taxon>Bacillota</taxon>
        <taxon>Bacilli</taxon>
        <taxon>Lactobacillales</taxon>
        <taxon>Lactobacillaceae</taxon>
        <taxon>Ligilactobacillus</taxon>
    </lineage>
</organism>
<name>SYY_LIGS1</name>
<proteinExistence type="inferred from homology"/>
<protein>
    <recommendedName>
        <fullName evidence="1">Tyrosine--tRNA ligase</fullName>
        <ecNumber evidence="1">6.1.1.1</ecNumber>
    </recommendedName>
    <alternativeName>
        <fullName evidence="1">Tyrosyl-tRNA synthetase</fullName>
        <shortName evidence="1">TyrRS</shortName>
    </alternativeName>
</protein>
<gene>
    <name evidence="1" type="primary">tyrS</name>
    <name type="ordered locus">LSL_1366</name>
</gene>
<dbReference type="EC" id="6.1.1.1" evidence="1"/>
<dbReference type="EMBL" id="CP000233">
    <property type="protein sequence ID" value="ABE00171.1"/>
    <property type="molecule type" value="Genomic_DNA"/>
</dbReference>
<dbReference type="RefSeq" id="WP_003701368.1">
    <property type="nucleotide sequence ID" value="NC_007929.1"/>
</dbReference>
<dbReference type="RefSeq" id="YP_536254.1">
    <property type="nucleotide sequence ID" value="NC_007929.1"/>
</dbReference>
<dbReference type="SMR" id="Q1WSF8"/>
<dbReference type="STRING" id="362948.LSL_1366"/>
<dbReference type="KEGG" id="lsl:LSL_1366"/>
<dbReference type="PATRIC" id="fig|362948.14.peg.1443"/>
<dbReference type="HOGENOM" id="CLU_024003_0_3_9"/>
<dbReference type="OrthoDB" id="9804243at2"/>
<dbReference type="Proteomes" id="UP000006559">
    <property type="component" value="Chromosome"/>
</dbReference>
<dbReference type="GO" id="GO:0005829">
    <property type="term" value="C:cytosol"/>
    <property type="evidence" value="ECO:0007669"/>
    <property type="project" value="TreeGrafter"/>
</dbReference>
<dbReference type="GO" id="GO:0005524">
    <property type="term" value="F:ATP binding"/>
    <property type="evidence" value="ECO:0007669"/>
    <property type="project" value="UniProtKB-UniRule"/>
</dbReference>
<dbReference type="GO" id="GO:0003723">
    <property type="term" value="F:RNA binding"/>
    <property type="evidence" value="ECO:0007669"/>
    <property type="project" value="UniProtKB-KW"/>
</dbReference>
<dbReference type="GO" id="GO:0004831">
    <property type="term" value="F:tyrosine-tRNA ligase activity"/>
    <property type="evidence" value="ECO:0007669"/>
    <property type="project" value="UniProtKB-UniRule"/>
</dbReference>
<dbReference type="GO" id="GO:0006437">
    <property type="term" value="P:tyrosyl-tRNA aminoacylation"/>
    <property type="evidence" value="ECO:0007669"/>
    <property type="project" value="UniProtKB-UniRule"/>
</dbReference>
<dbReference type="CDD" id="cd00165">
    <property type="entry name" value="S4"/>
    <property type="match status" value="1"/>
</dbReference>
<dbReference type="FunFam" id="1.10.240.10:FF:000001">
    <property type="entry name" value="Tyrosine--tRNA ligase"/>
    <property type="match status" value="1"/>
</dbReference>
<dbReference type="Gene3D" id="3.40.50.620">
    <property type="entry name" value="HUPs"/>
    <property type="match status" value="1"/>
</dbReference>
<dbReference type="Gene3D" id="3.10.290.10">
    <property type="entry name" value="RNA-binding S4 domain"/>
    <property type="match status" value="1"/>
</dbReference>
<dbReference type="Gene3D" id="1.10.240.10">
    <property type="entry name" value="Tyrosyl-Transfer RNA Synthetase"/>
    <property type="match status" value="1"/>
</dbReference>
<dbReference type="HAMAP" id="MF_02006">
    <property type="entry name" value="Tyr_tRNA_synth_type1"/>
    <property type="match status" value="1"/>
</dbReference>
<dbReference type="InterPro" id="IPR001412">
    <property type="entry name" value="aa-tRNA-synth_I_CS"/>
</dbReference>
<dbReference type="InterPro" id="IPR002305">
    <property type="entry name" value="aa-tRNA-synth_Ic"/>
</dbReference>
<dbReference type="InterPro" id="IPR014729">
    <property type="entry name" value="Rossmann-like_a/b/a_fold"/>
</dbReference>
<dbReference type="InterPro" id="IPR036986">
    <property type="entry name" value="S4_RNA-bd_sf"/>
</dbReference>
<dbReference type="InterPro" id="IPR054608">
    <property type="entry name" value="SYY-like_C"/>
</dbReference>
<dbReference type="InterPro" id="IPR002307">
    <property type="entry name" value="Tyr-tRNA-ligase"/>
</dbReference>
<dbReference type="InterPro" id="IPR024088">
    <property type="entry name" value="Tyr-tRNA-ligase_bac-type"/>
</dbReference>
<dbReference type="InterPro" id="IPR024107">
    <property type="entry name" value="Tyr-tRNA-ligase_bac_1"/>
</dbReference>
<dbReference type="NCBIfam" id="TIGR00234">
    <property type="entry name" value="tyrS"/>
    <property type="match status" value="1"/>
</dbReference>
<dbReference type="PANTHER" id="PTHR11766:SF0">
    <property type="entry name" value="TYROSINE--TRNA LIGASE, MITOCHONDRIAL"/>
    <property type="match status" value="1"/>
</dbReference>
<dbReference type="PANTHER" id="PTHR11766">
    <property type="entry name" value="TYROSYL-TRNA SYNTHETASE"/>
    <property type="match status" value="1"/>
</dbReference>
<dbReference type="Pfam" id="PF22421">
    <property type="entry name" value="SYY_C-terminal"/>
    <property type="match status" value="1"/>
</dbReference>
<dbReference type="Pfam" id="PF00579">
    <property type="entry name" value="tRNA-synt_1b"/>
    <property type="match status" value="1"/>
</dbReference>
<dbReference type="PRINTS" id="PR01040">
    <property type="entry name" value="TRNASYNTHTYR"/>
</dbReference>
<dbReference type="SUPFAM" id="SSF55174">
    <property type="entry name" value="Alpha-L RNA-binding motif"/>
    <property type="match status" value="1"/>
</dbReference>
<dbReference type="SUPFAM" id="SSF52374">
    <property type="entry name" value="Nucleotidylyl transferase"/>
    <property type="match status" value="1"/>
</dbReference>
<dbReference type="PROSITE" id="PS00178">
    <property type="entry name" value="AA_TRNA_LIGASE_I"/>
    <property type="match status" value="1"/>
</dbReference>
<dbReference type="PROSITE" id="PS50889">
    <property type="entry name" value="S4"/>
    <property type="match status" value="1"/>
</dbReference>
<accession>Q1WSF8</accession>
<keyword id="KW-0030">Aminoacyl-tRNA synthetase</keyword>
<keyword id="KW-0067">ATP-binding</keyword>
<keyword id="KW-0963">Cytoplasm</keyword>
<keyword id="KW-0436">Ligase</keyword>
<keyword id="KW-0547">Nucleotide-binding</keyword>
<keyword id="KW-0648">Protein biosynthesis</keyword>
<keyword id="KW-1185">Reference proteome</keyword>
<keyword id="KW-0694">RNA-binding</keyword>
<reference key="1">
    <citation type="journal article" date="2006" name="Proc. Natl. Acad. Sci. U.S.A.">
        <title>Multireplicon genome architecture of Lactobacillus salivarius.</title>
        <authorList>
            <person name="Claesson M.J."/>
            <person name="Li Y."/>
            <person name="Leahy S."/>
            <person name="Canchaya C."/>
            <person name="van Pijkeren J.P."/>
            <person name="Cerdeno-Tarraga A.M."/>
            <person name="Parkhill J."/>
            <person name="Flynn S."/>
            <person name="O'Sullivan G.C."/>
            <person name="Collins J.K."/>
            <person name="Higgins D."/>
            <person name="Shanahan F."/>
            <person name="Fitzgerald G.F."/>
            <person name="van Sinderen D."/>
            <person name="O'Toole P.W."/>
        </authorList>
    </citation>
    <scope>NUCLEOTIDE SEQUENCE [LARGE SCALE GENOMIC DNA]</scope>
    <source>
        <strain>UCC118</strain>
    </source>
</reference>
<sequence length="416" mass="47133">MNILDELAWRGAINQVSDEEGLRKLLDKKSVGLYCGVDPTGDSLHIGHLIPFMMLKRFQEAGHRAHIIIGGGTGSIGDPSGKKSERVLQTMEQVHHNEEALTKQMKHLFGKDNITIVNNRDWLSKIDLLGFLRDYGKLFNVNTMLNKEVVASRLEVGISFTEFTYQILQSIDFHHLWKNNDVQLQIGGADQWGNITSGIDLIHKMEGSEAEAYALTIPLMLKADGTKFGKTAGGAVWLDPEKTTPYEFYQFWLNQDDRDVIKYLKYFTFLSQEEIADLEEKVKTQPEKREAQRRLAEETVEFVHGKEAVKEAEHISAALFSGEVKDLTASEIEQGFKNMPSVEVTAEPKNIVEWLVDTGIESSKRQAREDVTNGAIRINGDRIQDLEFTIDPSAEFDGKFVIVRRGKKKYFLARVK</sequence>
<feature type="chain" id="PRO_1000189303" description="Tyrosine--tRNA ligase">
    <location>
        <begin position="1"/>
        <end position="416"/>
    </location>
</feature>
<feature type="domain" description="S4 RNA-binding" evidence="1">
    <location>
        <begin position="349"/>
        <end position="416"/>
    </location>
</feature>
<feature type="short sequence motif" description="'HIGH' region">
    <location>
        <begin position="39"/>
        <end position="48"/>
    </location>
</feature>
<feature type="short sequence motif" description="'KMSKS' region">
    <location>
        <begin position="227"/>
        <end position="231"/>
    </location>
</feature>
<feature type="binding site" evidence="1">
    <location>
        <position position="34"/>
    </location>
    <ligand>
        <name>L-tyrosine</name>
        <dbReference type="ChEBI" id="CHEBI:58315"/>
    </ligand>
</feature>
<feature type="binding site" evidence="1">
    <location>
        <position position="165"/>
    </location>
    <ligand>
        <name>L-tyrosine</name>
        <dbReference type="ChEBI" id="CHEBI:58315"/>
    </ligand>
</feature>
<feature type="binding site" evidence="1">
    <location>
        <position position="169"/>
    </location>
    <ligand>
        <name>L-tyrosine</name>
        <dbReference type="ChEBI" id="CHEBI:58315"/>
    </ligand>
</feature>
<feature type="binding site" evidence="1">
    <location>
        <position position="230"/>
    </location>
    <ligand>
        <name>ATP</name>
        <dbReference type="ChEBI" id="CHEBI:30616"/>
    </ligand>
</feature>
<evidence type="ECO:0000255" key="1">
    <source>
        <dbReference type="HAMAP-Rule" id="MF_02006"/>
    </source>
</evidence>